<keyword id="KW-0548">Nucleotidyltransferase</keyword>
<keyword id="KW-0694">RNA-binding</keyword>
<keyword id="KW-0698">rRNA processing</keyword>
<keyword id="KW-0808">Transferase</keyword>
<keyword id="KW-0819">tRNA processing</keyword>
<keyword id="KW-0820">tRNA-binding</keyword>
<sequence>MRVDGRESNALRNIEVTPDYLMHPEGSVLIASGNTKVICSASVETKVPPFMRGEGRGWISAEYSMLPRATNTRNIRESSKGKVTGRTMEIQRLIGRALRAVVDLDALGERTIWLDCDVIQADGGTRTASITGAFIAMVMAIAKLDEAVPFAKFPVKDFLAATSVGVLEEGGTVLDLNYVEDSAAQVDMNIIMTGSGAFVELQGTGEEATFSETELAELIALGKKGISELIEIQKETLGDKVTARIKGE</sequence>
<dbReference type="EC" id="2.7.7.56" evidence="1"/>
<dbReference type="EMBL" id="FM242711">
    <property type="protein sequence ID" value="CAS05009.1"/>
    <property type="molecule type" value="Genomic_DNA"/>
</dbReference>
<dbReference type="RefSeq" id="WP_003726032.1">
    <property type="nucleotide sequence ID" value="NC_012488.1"/>
</dbReference>
<dbReference type="SMR" id="C1L2E3"/>
<dbReference type="KEGG" id="lmc:Lm4b_01243"/>
<dbReference type="HOGENOM" id="CLU_050858_0_0_9"/>
<dbReference type="GO" id="GO:0000175">
    <property type="term" value="F:3'-5'-RNA exonuclease activity"/>
    <property type="evidence" value="ECO:0007669"/>
    <property type="project" value="UniProtKB-UniRule"/>
</dbReference>
<dbReference type="GO" id="GO:0000049">
    <property type="term" value="F:tRNA binding"/>
    <property type="evidence" value="ECO:0007669"/>
    <property type="project" value="UniProtKB-UniRule"/>
</dbReference>
<dbReference type="GO" id="GO:0009022">
    <property type="term" value="F:tRNA nucleotidyltransferase activity"/>
    <property type="evidence" value="ECO:0007669"/>
    <property type="project" value="UniProtKB-UniRule"/>
</dbReference>
<dbReference type="GO" id="GO:0016075">
    <property type="term" value="P:rRNA catabolic process"/>
    <property type="evidence" value="ECO:0007669"/>
    <property type="project" value="UniProtKB-UniRule"/>
</dbReference>
<dbReference type="GO" id="GO:0006364">
    <property type="term" value="P:rRNA processing"/>
    <property type="evidence" value="ECO:0007669"/>
    <property type="project" value="UniProtKB-KW"/>
</dbReference>
<dbReference type="GO" id="GO:0008033">
    <property type="term" value="P:tRNA processing"/>
    <property type="evidence" value="ECO:0007669"/>
    <property type="project" value="UniProtKB-UniRule"/>
</dbReference>
<dbReference type="CDD" id="cd11362">
    <property type="entry name" value="RNase_PH_bact"/>
    <property type="match status" value="1"/>
</dbReference>
<dbReference type="FunFam" id="3.30.230.70:FF:000003">
    <property type="entry name" value="Ribonuclease PH"/>
    <property type="match status" value="1"/>
</dbReference>
<dbReference type="Gene3D" id="3.30.230.70">
    <property type="entry name" value="GHMP Kinase, N-terminal domain"/>
    <property type="match status" value="1"/>
</dbReference>
<dbReference type="HAMAP" id="MF_00564">
    <property type="entry name" value="RNase_PH"/>
    <property type="match status" value="1"/>
</dbReference>
<dbReference type="InterPro" id="IPR001247">
    <property type="entry name" value="ExoRNase_PH_dom1"/>
</dbReference>
<dbReference type="InterPro" id="IPR015847">
    <property type="entry name" value="ExoRNase_PH_dom2"/>
</dbReference>
<dbReference type="InterPro" id="IPR036345">
    <property type="entry name" value="ExoRNase_PH_dom2_sf"/>
</dbReference>
<dbReference type="InterPro" id="IPR027408">
    <property type="entry name" value="PNPase/RNase_PH_dom_sf"/>
</dbReference>
<dbReference type="InterPro" id="IPR020568">
    <property type="entry name" value="Ribosomal_Su5_D2-typ_SF"/>
</dbReference>
<dbReference type="InterPro" id="IPR050080">
    <property type="entry name" value="RNase_PH"/>
</dbReference>
<dbReference type="InterPro" id="IPR002381">
    <property type="entry name" value="RNase_PH_bac-type"/>
</dbReference>
<dbReference type="InterPro" id="IPR018336">
    <property type="entry name" value="RNase_PH_CS"/>
</dbReference>
<dbReference type="NCBIfam" id="TIGR01966">
    <property type="entry name" value="RNasePH"/>
    <property type="match status" value="1"/>
</dbReference>
<dbReference type="PANTHER" id="PTHR11953">
    <property type="entry name" value="EXOSOME COMPLEX COMPONENT"/>
    <property type="match status" value="1"/>
</dbReference>
<dbReference type="PANTHER" id="PTHR11953:SF0">
    <property type="entry name" value="EXOSOME COMPLEX COMPONENT RRP41"/>
    <property type="match status" value="1"/>
</dbReference>
<dbReference type="Pfam" id="PF01138">
    <property type="entry name" value="RNase_PH"/>
    <property type="match status" value="1"/>
</dbReference>
<dbReference type="Pfam" id="PF03725">
    <property type="entry name" value="RNase_PH_C"/>
    <property type="match status" value="1"/>
</dbReference>
<dbReference type="SUPFAM" id="SSF55666">
    <property type="entry name" value="Ribonuclease PH domain 2-like"/>
    <property type="match status" value="1"/>
</dbReference>
<dbReference type="SUPFAM" id="SSF54211">
    <property type="entry name" value="Ribosomal protein S5 domain 2-like"/>
    <property type="match status" value="1"/>
</dbReference>
<dbReference type="PROSITE" id="PS01277">
    <property type="entry name" value="RIBONUCLEASE_PH"/>
    <property type="match status" value="1"/>
</dbReference>
<organism>
    <name type="scientific">Listeria monocytogenes serotype 4b (strain CLIP80459)</name>
    <dbReference type="NCBI Taxonomy" id="568819"/>
    <lineage>
        <taxon>Bacteria</taxon>
        <taxon>Bacillati</taxon>
        <taxon>Bacillota</taxon>
        <taxon>Bacilli</taxon>
        <taxon>Bacillales</taxon>
        <taxon>Listeriaceae</taxon>
        <taxon>Listeria</taxon>
    </lineage>
</organism>
<gene>
    <name evidence="1" type="primary">rph</name>
    <name type="ordered locus">Lm4b_01243</name>
</gene>
<feature type="chain" id="PRO_1000212065" description="Ribonuclease PH">
    <location>
        <begin position="1"/>
        <end position="248"/>
    </location>
</feature>
<feature type="binding site" evidence="1">
    <location>
        <position position="86"/>
    </location>
    <ligand>
        <name>phosphate</name>
        <dbReference type="ChEBI" id="CHEBI:43474"/>
        <note>substrate</note>
    </ligand>
</feature>
<feature type="binding site" evidence="1">
    <location>
        <begin position="124"/>
        <end position="126"/>
    </location>
    <ligand>
        <name>phosphate</name>
        <dbReference type="ChEBI" id="CHEBI:43474"/>
        <note>substrate</note>
    </ligand>
</feature>
<protein>
    <recommendedName>
        <fullName evidence="1">Ribonuclease PH</fullName>
        <shortName evidence="1">RNase PH</shortName>
        <ecNumber evidence="1">2.7.7.56</ecNumber>
    </recommendedName>
    <alternativeName>
        <fullName evidence="1">tRNA nucleotidyltransferase</fullName>
    </alternativeName>
</protein>
<comment type="function">
    <text evidence="1">Phosphorolytic 3'-5' exoribonuclease that plays an important role in tRNA 3'-end maturation. Removes nucleotide residues following the 3'-CCA terminus of tRNAs; can also add nucleotides to the ends of RNA molecules by using nucleoside diphosphates as substrates, but this may not be physiologically important. Probably plays a role in initiation of 16S rRNA degradation (leading to ribosome degradation) during starvation.</text>
</comment>
<comment type="catalytic activity">
    <reaction evidence="1">
        <text>tRNA(n+1) + phosphate = tRNA(n) + a ribonucleoside 5'-diphosphate</text>
        <dbReference type="Rhea" id="RHEA:10628"/>
        <dbReference type="Rhea" id="RHEA-COMP:17343"/>
        <dbReference type="Rhea" id="RHEA-COMP:17344"/>
        <dbReference type="ChEBI" id="CHEBI:43474"/>
        <dbReference type="ChEBI" id="CHEBI:57930"/>
        <dbReference type="ChEBI" id="CHEBI:173114"/>
        <dbReference type="EC" id="2.7.7.56"/>
    </reaction>
</comment>
<comment type="subunit">
    <text evidence="1">Homohexameric ring arranged as a trimer of dimers.</text>
</comment>
<comment type="similarity">
    <text evidence="1">Belongs to the RNase PH family.</text>
</comment>
<reference key="1">
    <citation type="journal article" date="2012" name="BMC Genomics">
        <title>Comparative genomics and transcriptomics of lineages I, II, and III strains of Listeria monocytogenes.</title>
        <authorList>
            <person name="Hain T."/>
            <person name="Ghai R."/>
            <person name="Billion A."/>
            <person name="Kuenne C.T."/>
            <person name="Steinweg C."/>
            <person name="Izar B."/>
            <person name="Mohamed W."/>
            <person name="Mraheil M."/>
            <person name="Domann E."/>
            <person name="Schaffrath S."/>
            <person name="Karst U."/>
            <person name="Goesmann A."/>
            <person name="Oehm S."/>
            <person name="Puhler A."/>
            <person name="Merkl R."/>
            <person name="Vorwerk S."/>
            <person name="Glaser P."/>
            <person name="Garrido P."/>
            <person name="Rusniok C."/>
            <person name="Buchrieser C."/>
            <person name="Goebel W."/>
            <person name="Chakraborty T."/>
        </authorList>
    </citation>
    <scope>NUCLEOTIDE SEQUENCE [LARGE SCALE GENOMIC DNA]</scope>
    <source>
        <strain>CLIP80459</strain>
    </source>
</reference>
<name>RNPH_LISMC</name>
<evidence type="ECO:0000255" key="1">
    <source>
        <dbReference type="HAMAP-Rule" id="MF_00564"/>
    </source>
</evidence>
<accession>C1L2E3</accession>
<proteinExistence type="inferred from homology"/>